<comment type="catalytic activity">
    <reaction>
        <text>5-amino-1-(5-phospho-D-ribosyl)imidazole-4-carboxylate + L-aspartate + ATP = (2S)-2-[5-amino-1-(5-phospho-beta-D-ribosyl)imidazole-4-carboxamido]succinate + ADP + phosphate + 2 H(+)</text>
        <dbReference type="Rhea" id="RHEA:22628"/>
        <dbReference type="ChEBI" id="CHEBI:15378"/>
        <dbReference type="ChEBI" id="CHEBI:29991"/>
        <dbReference type="ChEBI" id="CHEBI:30616"/>
        <dbReference type="ChEBI" id="CHEBI:43474"/>
        <dbReference type="ChEBI" id="CHEBI:58443"/>
        <dbReference type="ChEBI" id="CHEBI:77657"/>
        <dbReference type="ChEBI" id="CHEBI:456216"/>
        <dbReference type="EC" id="6.3.2.6"/>
    </reaction>
</comment>
<comment type="pathway">
    <text>Purine metabolism; IMP biosynthesis via de novo pathway; 5-amino-1-(5-phospho-D-ribosyl)imidazole-4-carboxamide from 5-amino-1-(5-phospho-D-ribosyl)imidazole-4-carboxylate: step 1/2.</text>
</comment>
<comment type="similarity">
    <text evidence="1">Belongs to the SAICAR synthetase family.</text>
</comment>
<evidence type="ECO:0000305" key="1"/>
<keyword id="KW-0067">ATP-binding</keyword>
<keyword id="KW-0436">Ligase</keyword>
<keyword id="KW-0547">Nucleotide-binding</keyword>
<keyword id="KW-0658">Purine biosynthesis</keyword>
<keyword id="KW-1185">Reference proteome</keyword>
<dbReference type="EC" id="6.3.2.6"/>
<dbReference type="EMBL" id="AE007869">
    <property type="protein sequence ID" value="AAK88273.1"/>
    <property type="molecule type" value="Genomic_DNA"/>
</dbReference>
<dbReference type="PIR" id="AC2889">
    <property type="entry name" value="AC2889"/>
</dbReference>
<dbReference type="PIR" id="H97664">
    <property type="entry name" value="H97664"/>
</dbReference>
<dbReference type="RefSeq" id="NP_355488.1">
    <property type="nucleotide sequence ID" value="NC_003062.2"/>
</dbReference>
<dbReference type="RefSeq" id="WP_010972392.1">
    <property type="nucleotide sequence ID" value="NC_003062.2"/>
</dbReference>
<dbReference type="SMR" id="Q8UCE7"/>
<dbReference type="STRING" id="176299.Atu2548"/>
<dbReference type="EnsemblBacteria" id="AAK88273">
    <property type="protein sequence ID" value="AAK88273"/>
    <property type="gene ID" value="Atu2548"/>
</dbReference>
<dbReference type="GeneID" id="1134586"/>
<dbReference type="KEGG" id="atu:Atu2548"/>
<dbReference type="PATRIC" id="fig|176299.10.peg.2552"/>
<dbReference type="eggNOG" id="COG0152">
    <property type="taxonomic scope" value="Bacteria"/>
</dbReference>
<dbReference type="HOGENOM" id="CLU_045637_0_1_5"/>
<dbReference type="OrthoDB" id="9801549at2"/>
<dbReference type="PhylomeDB" id="Q8UCE7"/>
<dbReference type="BioCyc" id="AGRO:ATU2548-MONOMER"/>
<dbReference type="UniPathway" id="UPA00074">
    <property type="reaction ID" value="UER00131"/>
</dbReference>
<dbReference type="Proteomes" id="UP000000813">
    <property type="component" value="Chromosome circular"/>
</dbReference>
<dbReference type="GO" id="GO:0005737">
    <property type="term" value="C:cytoplasm"/>
    <property type="evidence" value="ECO:0007669"/>
    <property type="project" value="TreeGrafter"/>
</dbReference>
<dbReference type="GO" id="GO:0005524">
    <property type="term" value="F:ATP binding"/>
    <property type="evidence" value="ECO:0007669"/>
    <property type="project" value="UniProtKB-KW"/>
</dbReference>
<dbReference type="GO" id="GO:0004639">
    <property type="term" value="F:phosphoribosylaminoimidazolesuccinocarboxamide synthase activity"/>
    <property type="evidence" value="ECO:0007669"/>
    <property type="project" value="UniProtKB-UniRule"/>
</dbReference>
<dbReference type="GO" id="GO:0006189">
    <property type="term" value="P:'de novo' IMP biosynthetic process"/>
    <property type="evidence" value="ECO:0007669"/>
    <property type="project" value="UniProtKB-UniRule"/>
</dbReference>
<dbReference type="CDD" id="cd01414">
    <property type="entry name" value="SAICAR_synt_Sc"/>
    <property type="match status" value="1"/>
</dbReference>
<dbReference type="FunFam" id="3.30.470.20:FF:000015">
    <property type="entry name" value="Phosphoribosylaminoimidazole-succinocarboxamide synthase"/>
    <property type="match status" value="1"/>
</dbReference>
<dbReference type="Gene3D" id="3.30.470.20">
    <property type="entry name" value="ATP-grasp fold, B domain"/>
    <property type="match status" value="1"/>
</dbReference>
<dbReference type="Gene3D" id="3.30.200.20">
    <property type="entry name" value="Phosphorylase Kinase, domain 1"/>
    <property type="match status" value="1"/>
</dbReference>
<dbReference type="HAMAP" id="MF_00137">
    <property type="entry name" value="SAICAR_synth"/>
    <property type="match status" value="1"/>
</dbReference>
<dbReference type="InterPro" id="IPR028923">
    <property type="entry name" value="SAICAR_synt/ADE2_N"/>
</dbReference>
<dbReference type="InterPro" id="IPR018236">
    <property type="entry name" value="SAICAR_synthetase_CS"/>
</dbReference>
<dbReference type="NCBIfam" id="NF009251">
    <property type="entry name" value="PRK12607.1"/>
    <property type="match status" value="1"/>
</dbReference>
<dbReference type="NCBIfam" id="NF010568">
    <property type="entry name" value="PRK13961.1"/>
    <property type="match status" value="1"/>
</dbReference>
<dbReference type="PANTHER" id="PTHR43700">
    <property type="entry name" value="PHOSPHORIBOSYLAMINOIMIDAZOLE-SUCCINOCARBOXAMIDE SYNTHASE"/>
    <property type="match status" value="1"/>
</dbReference>
<dbReference type="PANTHER" id="PTHR43700:SF1">
    <property type="entry name" value="PHOSPHORIBOSYLAMINOIMIDAZOLE-SUCCINOCARBOXAMIDE SYNTHASE"/>
    <property type="match status" value="1"/>
</dbReference>
<dbReference type="Pfam" id="PF01259">
    <property type="entry name" value="SAICAR_synt"/>
    <property type="match status" value="1"/>
</dbReference>
<dbReference type="SUPFAM" id="SSF56104">
    <property type="entry name" value="SAICAR synthase-like"/>
    <property type="match status" value="1"/>
</dbReference>
<dbReference type="PROSITE" id="PS01057">
    <property type="entry name" value="SAICAR_SYNTHETASE_1"/>
    <property type="match status" value="1"/>
</dbReference>
<dbReference type="PROSITE" id="PS01058">
    <property type="entry name" value="SAICAR_SYNTHETASE_2"/>
    <property type="match status" value="1"/>
</dbReference>
<protein>
    <recommendedName>
        <fullName>Putative phosphoribosylaminoimidazole-succinocarboxamide synthase 2</fullName>
        <ecNumber>6.3.2.6</ecNumber>
    </recommendedName>
    <alternativeName>
        <fullName>SAICAR synthetase 2</fullName>
    </alternativeName>
</protein>
<gene>
    <name type="primary">purC2</name>
    <name type="ordered locus">Atu2548</name>
    <name type="ORF">AGR_C_4615</name>
</gene>
<name>PUR72_AGRFC</name>
<sequence length="316" mass="35975">MRILDEAVIPELPNYYRGKVRENYDLPDGNRIIISTDRLSAFDQILTCIPYKGQVLTQTARYWFEQTKDICPNHVVSYPDPNVVIGKRLDILPVEVVVRGYLAGTTGTSILTLYKKGERQMYGMSLPDGMKDNQILPEPVITPTSKAFDGGHDEPLTPSEIVEKKLLTQEQWDTLSRYALALFRHGQEIAAKQGLILVDTKYEFGTDENGTIILADEIHTPDSSRYWMADSYDESFREGKRPASFDKDFVRAWVGERCDPYKDAVPKIPEDLVLQTSQVYIDAYERITGQRFVPDDSGETPLARVRRNLEPFFPGV</sequence>
<accession>Q8UCE7</accession>
<proteinExistence type="inferred from homology"/>
<organism>
    <name type="scientific">Agrobacterium fabrum (strain C58 / ATCC 33970)</name>
    <name type="common">Agrobacterium tumefaciens (strain C58)</name>
    <dbReference type="NCBI Taxonomy" id="176299"/>
    <lineage>
        <taxon>Bacteria</taxon>
        <taxon>Pseudomonadati</taxon>
        <taxon>Pseudomonadota</taxon>
        <taxon>Alphaproteobacteria</taxon>
        <taxon>Hyphomicrobiales</taxon>
        <taxon>Rhizobiaceae</taxon>
        <taxon>Rhizobium/Agrobacterium group</taxon>
        <taxon>Agrobacterium</taxon>
        <taxon>Agrobacterium tumefaciens complex</taxon>
    </lineage>
</organism>
<reference key="1">
    <citation type="journal article" date="2001" name="Science">
        <title>The genome of the natural genetic engineer Agrobacterium tumefaciens C58.</title>
        <authorList>
            <person name="Wood D.W."/>
            <person name="Setubal J.C."/>
            <person name="Kaul R."/>
            <person name="Monks D.E."/>
            <person name="Kitajima J.P."/>
            <person name="Okura V.K."/>
            <person name="Zhou Y."/>
            <person name="Chen L."/>
            <person name="Wood G.E."/>
            <person name="Almeida N.F. Jr."/>
            <person name="Woo L."/>
            <person name="Chen Y."/>
            <person name="Paulsen I.T."/>
            <person name="Eisen J.A."/>
            <person name="Karp P.D."/>
            <person name="Bovee D. Sr."/>
            <person name="Chapman P."/>
            <person name="Clendenning J."/>
            <person name="Deatherage G."/>
            <person name="Gillet W."/>
            <person name="Grant C."/>
            <person name="Kutyavin T."/>
            <person name="Levy R."/>
            <person name="Li M.-J."/>
            <person name="McClelland E."/>
            <person name="Palmieri A."/>
            <person name="Raymond C."/>
            <person name="Rouse G."/>
            <person name="Saenphimmachak C."/>
            <person name="Wu Z."/>
            <person name="Romero P."/>
            <person name="Gordon D."/>
            <person name="Zhang S."/>
            <person name="Yoo H."/>
            <person name="Tao Y."/>
            <person name="Biddle P."/>
            <person name="Jung M."/>
            <person name="Krespan W."/>
            <person name="Perry M."/>
            <person name="Gordon-Kamm B."/>
            <person name="Liao L."/>
            <person name="Kim S."/>
            <person name="Hendrick C."/>
            <person name="Zhao Z.-Y."/>
            <person name="Dolan M."/>
            <person name="Chumley F."/>
            <person name="Tingey S.V."/>
            <person name="Tomb J.-F."/>
            <person name="Gordon M.P."/>
            <person name="Olson M.V."/>
            <person name="Nester E.W."/>
        </authorList>
    </citation>
    <scope>NUCLEOTIDE SEQUENCE [LARGE SCALE GENOMIC DNA]</scope>
    <source>
        <strain>C58 / ATCC 33970</strain>
    </source>
</reference>
<reference key="2">
    <citation type="journal article" date="2001" name="Science">
        <title>Genome sequence of the plant pathogen and biotechnology agent Agrobacterium tumefaciens C58.</title>
        <authorList>
            <person name="Goodner B."/>
            <person name="Hinkle G."/>
            <person name="Gattung S."/>
            <person name="Miller N."/>
            <person name="Blanchard M."/>
            <person name="Qurollo B."/>
            <person name="Goldman B.S."/>
            <person name="Cao Y."/>
            <person name="Askenazi M."/>
            <person name="Halling C."/>
            <person name="Mullin L."/>
            <person name="Houmiel K."/>
            <person name="Gordon J."/>
            <person name="Vaudin M."/>
            <person name="Iartchouk O."/>
            <person name="Epp A."/>
            <person name="Liu F."/>
            <person name="Wollam C."/>
            <person name="Allinger M."/>
            <person name="Doughty D."/>
            <person name="Scott C."/>
            <person name="Lappas C."/>
            <person name="Markelz B."/>
            <person name="Flanagan C."/>
            <person name="Crowell C."/>
            <person name="Gurson J."/>
            <person name="Lomo C."/>
            <person name="Sear C."/>
            <person name="Strub G."/>
            <person name="Cielo C."/>
            <person name="Slater S."/>
        </authorList>
    </citation>
    <scope>NUCLEOTIDE SEQUENCE [LARGE SCALE GENOMIC DNA]</scope>
    <source>
        <strain>C58 / ATCC 33970</strain>
    </source>
</reference>
<feature type="chain" id="PRO_0000100795" description="Putative phosphoribosylaminoimidazole-succinocarboxamide synthase 2">
    <location>
        <begin position="1"/>
        <end position="316"/>
    </location>
</feature>